<feature type="chain" id="PRO_0000427935" description="Uncharacterized protein MT0090">
    <location>
        <begin position="1"/>
        <end position="640"/>
    </location>
</feature>
<feature type="transmembrane region" description="Helical" evidence="1">
    <location>
        <begin position="8"/>
        <end position="28"/>
    </location>
</feature>
<feature type="transmembrane region" description="Helical" evidence="1">
    <location>
        <begin position="52"/>
        <end position="72"/>
    </location>
</feature>
<feature type="transmembrane region" description="Helical" evidence="1">
    <location>
        <begin position="90"/>
        <end position="110"/>
    </location>
</feature>
<feature type="transmembrane region" description="Helical" evidence="1">
    <location>
        <begin position="136"/>
        <end position="156"/>
    </location>
</feature>
<feature type="transmembrane region" description="Helical" evidence="1">
    <location>
        <begin position="179"/>
        <end position="199"/>
    </location>
</feature>
<feature type="transmembrane region" description="Helical" evidence="1">
    <location>
        <begin position="208"/>
        <end position="228"/>
    </location>
</feature>
<feature type="transmembrane region" description="Helical" evidence="1">
    <location>
        <begin position="241"/>
        <end position="261"/>
    </location>
</feature>
<feature type="transmembrane region" description="Helical" evidence="1">
    <location>
        <begin position="277"/>
        <end position="297"/>
    </location>
</feature>
<feature type="transmembrane region" description="Helical" evidence="1">
    <location>
        <begin position="298"/>
        <end position="318"/>
    </location>
</feature>
<feature type="transmembrane region" description="Helical" evidence="1">
    <location>
        <begin position="352"/>
        <end position="372"/>
    </location>
</feature>
<feature type="transmembrane region" description="Helical" evidence="1">
    <location>
        <begin position="391"/>
        <end position="411"/>
    </location>
</feature>
<feature type="transmembrane region" description="Helical" evidence="1">
    <location>
        <begin position="446"/>
        <end position="466"/>
    </location>
</feature>
<feature type="transmembrane region" description="Helical" evidence="1">
    <location>
        <begin position="497"/>
        <end position="517"/>
    </location>
</feature>
<feature type="transmembrane region" description="Helical" evidence="1">
    <location>
        <begin position="619"/>
        <end position="639"/>
    </location>
</feature>
<name>Y051_MYCTO</name>
<protein>
    <recommendedName>
        <fullName>Uncharacterized protein MT0090</fullName>
    </recommendedName>
</protein>
<organism>
    <name type="scientific">Mycobacterium tuberculosis (strain CDC 1551 / Oshkosh)</name>
    <dbReference type="NCBI Taxonomy" id="83331"/>
    <lineage>
        <taxon>Bacteria</taxon>
        <taxon>Bacillati</taxon>
        <taxon>Actinomycetota</taxon>
        <taxon>Actinomycetes</taxon>
        <taxon>Mycobacteriales</taxon>
        <taxon>Mycobacteriaceae</taxon>
        <taxon>Mycobacterium</taxon>
        <taxon>Mycobacterium tuberculosis complex</taxon>
    </lineage>
</organism>
<dbReference type="EMBL" id="AE000516">
    <property type="protein sequence ID" value="AAK44315.1"/>
    <property type="molecule type" value="Genomic_DNA"/>
</dbReference>
<dbReference type="PIR" id="D70850">
    <property type="entry name" value="D70850"/>
</dbReference>
<dbReference type="RefSeq" id="WP_003907280.1">
    <property type="nucleotide sequence ID" value="NZ_KK341227.1"/>
</dbReference>
<dbReference type="SMR" id="P9WIW2"/>
<dbReference type="KEGG" id="mtc:MT0090"/>
<dbReference type="PATRIC" id="fig|83331.31.peg.95"/>
<dbReference type="HOGENOM" id="CLU_007100_8_1_11"/>
<dbReference type="Proteomes" id="UP000001020">
    <property type="component" value="Chromosome"/>
</dbReference>
<dbReference type="GO" id="GO:0005886">
    <property type="term" value="C:plasma membrane"/>
    <property type="evidence" value="ECO:0007669"/>
    <property type="project" value="UniProtKB-SubCell"/>
</dbReference>
<dbReference type="GO" id="GO:0008137">
    <property type="term" value="F:NADH dehydrogenase (ubiquinone) activity"/>
    <property type="evidence" value="ECO:0007669"/>
    <property type="project" value="InterPro"/>
</dbReference>
<dbReference type="GO" id="GO:0042773">
    <property type="term" value="P:ATP synthesis coupled electron transport"/>
    <property type="evidence" value="ECO:0007669"/>
    <property type="project" value="InterPro"/>
</dbReference>
<dbReference type="InterPro" id="IPR052175">
    <property type="entry name" value="ComplexI-like_HydComp"/>
</dbReference>
<dbReference type="InterPro" id="IPR003918">
    <property type="entry name" value="NADH_UbQ_OxRdtase"/>
</dbReference>
<dbReference type="InterPro" id="IPR001750">
    <property type="entry name" value="ND/Mrp_TM"/>
</dbReference>
<dbReference type="PANTHER" id="PTHR42682:SF3">
    <property type="entry name" value="FORMATE HYDROGENLYASE SUBUNIT 3-RELATED"/>
    <property type="match status" value="1"/>
</dbReference>
<dbReference type="PANTHER" id="PTHR42682">
    <property type="entry name" value="HYDROGENASE-4 COMPONENT F"/>
    <property type="match status" value="1"/>
</dbReference>
<dbReference type="Pfam" id="PF00361">
    <property type="entry name" value="Proton_antipo_M"/>
    <property type="match status" value="1"/>
</dbReference>
<dbReference type="PRINTS" id="PR01437">
    <property type="entry name" value="NUOXDRDTASE4"/>
</dbReference>
<gene>
    <name type="ordered locus">MT0090</name>
</gene>
<accession>P9WIW2</accession>
<accession>L0T497</accession>
<accession>O53628</accession>
<accession>Q10880</accession>
<sequence>MTAAPTAGGVVTSGVGVAGVGVGLLGMFGPVRVVHVGWLLPLSGVHIELDRLGGFFMALTGAVAAPVGCYLIGYVRREHLGRVPMAVVPLFVAAMLLVPAAGSVTTFLLAWELMAIASLILVLSEHARPQVRSAGLWYAVMTQLGFIAILVGLVVLAAAGGSDRFAGLGAVCDGVRAAVFMLTLVGFGSKAGLVPLHAWLPRAHPEAPSPVSALMSAAMVNLGIYGIVRFDLQLLGPGPRWWGLALLAVGGTSALYGVLQASVAADLKRLLAYSTTENMGLITLALGAATLFADTGAYGPASIAAAAAMLHMIAHAAFKSLAFMAAGSVLAATGLRDLDLLGGLARRMPATTVFFGVAALGACGLPLGAGFVSEWLLVQSLIHAAPGHDPIVALTTPLAVGVVALATGLSVAAMTKAFGIGFLARPRSTQAEAAREAPASMRAGMAIAAGACLVLAVAPLLVAPMVRRAAATLPAAQAVKFTGLGAVVRLPAMSGSIAPGVIAAAVLAAALAVAVLARWRFRRRPAPARLPLWACGAADLTVRMQYTATSFAEPLQRVFGDVLRPDTDIEVTHTAESRYMAERITYRTAVADAIEQRLYTPVVGAVAAMAELLRRAHTGSVHRYLAYGALGVLIVLVVAR</sequence>
<reference key="1">
    <citation type="journal article" date="2002" name="J. Bacteriol.">
        <title>Whole-genome comparison of Mycobacterium tuberculosis clinical and laboratory strains.</title>
        <authorList>
            <person name="Fleischmann R.D."/>
            <person name="Alland D."/>
            <person name="Eisen J.A."/>
            <person name="Carpenter L."/>
            <person name="White O."/>
            <person name="Peterson J.D."/>
            <person name="DeBoy R.T."/>
            <person name="Dodson R.J."/>
            <person name="Gwinn M.L."/>
            <person name="Haft D.H."/>
            <person name="Hickey E.K."/>
            <person name="Kolonay J.F."/>
            <person name="Nelson W.C."/>
            <person name="Umayam L.A."/>
            <person name="Ermolaeva M.D."/>
            <person name="Salzberg S.L."/>
            <person name="Delcher A."/>
            <person name="Utterback T.R."/>
            <person name="Weidman J.F."/>
            <person name="Khouri H.M."/>
            <person name="Gill J."/>
            <person name="Mikula A."/>
            <person name="Bishai W."/>
            <person name="Jacobs W.R. Jr."/>
            <person name="Venter J.C."/>
            <person name="Fraser C.M."/>
        </authorList>
    </citation>
    <scope>NUCLEOTIDE SEQUENCE [LARGE SCALE GENOMIC DNA]</scope>
    <source>
        <strain>CDC 1551 / Oshkosh</strain>
    </source>
</reference>
<comment type="subcellular location">
    <subcellularLocation>
        <location evidence="2">Cell membrane</location>
        <topology evidence="2">Multi-pass membrane protein</topology>
    </subcellularLocation>
</comment>
<comment type="similarity">
    <text evidence="2">Belongs to the complex I subunit 4 family.</text>
</comment>
<proteinExistence type="inferred from homology"/>
<evidence type="ECO:0000255" key="1"/>
<evidence type="ECO:0000305" key="2"/>
<keyword id="KW-1003">Cell membrane</keyword>
<keyword id="KW-0472">Membrane</keyword>
<keyword id="KW-0560">Oxidoreductase</keyword>
<keyword id="KW-1185">Reference proteome</keyword>
<keyword id="KW-0812">Transmembrane</keyword>
<keyword id="KW-1133">Transmembrane helix</keyword>